<keyword id="KW-0007">Acetylation</keyword>
<keyword id="KW-0472">Membrane</keyword>
<keyword id="KW-1267">Proteomics identification</keyword>
<keyword id="KW-1185">Reference proteome</keyword>
<keyword id="KW-0812">Transmembrane</keyword>
<keyword id="KW-1133">Transmembrane helix</keyword>
<organism>
    <name type="scientific">Homo sapiens</name>
    <name type="common">Human</name>
    <dbReference type="NCBI Taxonomy" id="9606"/>
    <lineage>
        <taxon>Eukaryota</taxon>
        <taxon>Metazoa</taxon>
        <taxon>Chordata</taxon>
        <taxon>Craniata</taxon>
        <taxon>Vertebrata</taxon>
        <taxon>Euteleostomi</taxon>
        <taxon>Mammalia</taxon>
        <taxon>Eutheria</taxon>
        <taxon>Euarchontoglires</taxon>
        <taxon>Primates</taxon>
        <taxon>Haplorrhini</taxon>
        <taxon>Catarrhini</taxon>
        <taxon>Hominidae</taxon>
        <taxon>Homo</taxon>
    </lineage>
</organism>
<feature type="chain" id="PRO_0000286701" description="TLC domain-containing protein 4">
    <location>
        <begin position="1"/>
        <end position="263"/>
    </location>
</feature>
<feature type="transmembrane region" description="Helical" evidence="1">
    <location>
        <begin position="7"/>
        <end position="27"/>
    </location>
</feature>
<feature type="transmembrane region" description="Helical" evidence="1">
    <location>
        <begin position="53"/>
        <end position="73"/>
    </location>
</feature>
<feature type="transmembrane region" description="Helical" evidence="1">
    <location>
        <begin position="90"/>
        <end position="110"/>
    </location>
</feature>
<feature type="transmembrane region" description="Helical" evidence="1">
    <location>
        <begin position="124"/>
        <end position="144"/>
    </location>
</feature>
<feature type="transmembrane region" description="Helical" evidence="1">
    <location>
        <begin position="173"/>
        <end position="193"/>
    </location>
</feature>
<feature type="transmembrane region" description="Helical" evidence="1">
    <location>
        <begin position="211"/>
        <end position="231"/>
    </location>
</feature>
<feature type="domain" description="TLC" evidence="2">
    <location>
        <begin position="44"/>
        <end position="246"/>
    </location>
</feature>
<feature type="modified residue" description="N6-acetyllysine" evidence="5">
    <location>
        <position position="165"/>
    </location>
</feature>
<name>TLCD4_HUMAN</name>
<evidence type="ECO:0000255" key="1"/>
<evidence type="ECO:0000255" key="2">
    <source>
        <dbReference type="PROSITE-ProRule" id="PRU00205"/>
    </source>
</evidence>
<evidence type="ECO:0000305" key="3"/>
<evidence type="ECO:0000312" key="4">
    <source>
        <dbReference type="HGNC" id="HGNC:26477"/>
    </source>
</evidence>
<evidence type="ECO:0007744" key="5">
    <source>
    </source>
</evidence>
<gene>
    <name evidence="4" type="primary">TLCD4</name>
    <name type="synonym">TMEM56</name>
</gene>
<accession>Q96MV1</accession>
<accession>B2RPI2</accession>
<accession>D3DT48</accession>
<comment type="interaction">
    <interactant intactId="EBI-12947623">
        <id>Q96MV1</id>
    </interactant>
    <interactant intactId="EBI-2682765">
        <id>O60242</id>
        <label>ADGRB3</label>
    </interactant>
    <organismsDiffer>false</organismsDiffer>
    <experiments>3</experiments>
</comment>
<comment type="interaction">
    <interactant intactId="EBI-12947623">
        <id>Q96MV1</id>
    </interactant>
    <interactant intactId="EBI-11277970">
        <id>Q9UHX3</id>
        <label>ADGRE2</label>
    </interactant>
    <organismsDiffer>false</organismsDiffer>
    <experiments>3</experiments>
</comment>
<comment type="interaction">
    <interactant intactId="EBI-12947623">
        <id>Q96MV1</id>
    </interactant>
    <interactant intactId="EBI-11724186">
        <id>Q9H2C2</id>
        <label>ARV1</label>
    </interactant>
    <organismsDiffer>false</organismsDiffer>
    <experiments>3</experiments>
</comment>
<comment type="interaction">
    <interactant intactId="EBI-12947623">
        <id>Q96MV1</id>
    </interactant>
    <interactant intactId="EBI-12069500">
        <id>Q9HD20-3</id>
        <label>ATP13A1</label>
    </interactant>
    <organismsDiffer>false</organismsDiffer>
    <experiments>3</experiments>
</comment>
<comment type="interaction">
    <interactant intactId="EBI-12947623">
        <id>Q96MV1</id>
    </interactant>
    <interactant intactId="EBI-749464">
        <id>Q12983</id>
        <label>BNIP3</label>
    </interactant>
    <organismsDiffer>false</organismsDiffer>
    <experiments>3</experiments>
</comment>
<comment type="interaction">
    <interactant intactId="EBI-12947623">
        <id>Q96MV1</id>
    </interactant>
    <interactant intactId="EBI-9686780">
        <id>Q06432</id>
        <label>CACNG1</label>
    </interactant>
    <organismsDiffer>false</organismsDiffer>
    <experiments>3</experiments>
</comment>
<comment type="interaction">
    <interactant intactId="EBI-12947623">
        <id>Q96MV1</id>
    </interactant>
    <interactant intactId="EBI-9083477">
        <id>Q9P0B6</id>
        <label>CCDC167</label>
    </interactant>
    <organismsDiffer>false</organismsDiffer>
    <experiments>3</experiments>
</comment>
<comment type="interaction">
    <interactant intactId="EBI-12947623">
        <id>Q96MV1</id>
    </interactant>
    <interactant intactId="EBI-358858">
        <id>O14735</id>
        <label>CDIPT</label>
    </interactant>
    <organismsDiffer>false</organismsDiffer>
    <experiments>3</experiments>
</comment>
<comment type="interaction">
    <interactant intactId="EBI-12947623">
        <id>Q96MV1</id>
    </interactant>
    <interactant intactId="EBI-11337856">
        <id>Q8WUD6</id>
        <label>CHPT1</label>
    </interactant>
    <organismsDiffer>false</organismsDiffer>
    <experiments>3</experiments>
</comment>
<comment type="interaction">
    <interactant intactId="EBI-12947623">
        <id>Q96MV1</id>
    </interactant>
    <interactant intactId="EBI-4402346">
        <id>P51798</id>
        <label>CLCN7</label>
    </interactant>
    <organismsDiffer>false</organismsDiffer>
    <experiments>3</experiments>
</comment>
<comment type="interaction">
    <interactant intactId="EBI-12947623">
        <id>Q96MV1</id>
    </interactant>
    <interactant intactId="EBI-11989440">
        <id>Q9BXN2-6</id>
        <label>CLEC7A</label>
    </interactant>
    <organismsDiffer>false</organismsDiffer>
    <experiments>3</experiments>
</comment>
<comment type="interaction">
    <interactant intactId="EBI-12947623">
        <id>Q96MV1</id>
    </interactant>
    <interactant intactId="EBI-11522780">
        <id>Q96DZ9-2</id>
        <label>CMTM5</label>
    </interactant>
    <organismsDiffer>false</organismsDiffer>
    <experiments>3</experiments>
</comment>
<comment type="interaction">
    <interactant intactId="EBI-12947623">
        <id>Q96MV1</id>
    </interactant>
    <interactant intactId="EBI-372265">
        <id>P21964</id>
        <label>COMT</label>
    </interactant>
    <organismsDiffer>false</organismsDiffer>
    <experiments>3</experiments>
</comment>
<comment type="interaction">
    <interactant intactId="EBI-12947623">
        <id>Q96MV1</id>
    </interactant>
    <interactant intactId="EBI-12019274">
        <id>Q4LDR2</id>
        <label>CTXN3</label>
    </interactant>
    <organismsDiffer>false</organismsDiffer>
    <experiments>3</experiments>
</comment>
<comment type="interaction">
    <interactant intactId="EBI-12947623">
        <id>Q96MV1</id>
    </interactant>
    <interactant intactId="EBI-1752413">
        <id>P78329</id>
        <label>CYP4F2</label>
    </interactant>
    <organismsDiffer>false</organismsDiffer>
    <experiments>3</experiments>
</comment>
<comment type="interaction">
    <interactant intactId="EBI-12947623">
        <id>Q96MV1</id>
    </interactant>
    <interactant intactId="EBI-17509525">
        <id>Q6NT55</id>
        <label>CYP4F22</label>
    </interactant>
    <organismsDiffer>false</organismsDiffer>
    <experiments>3</experiments>
</comment>
<comment type="interaction">
    <interactant intactId="EBI-12947623">
        <id>Q96MV1</id>
    </interactant>
    <interactant intactId="EBI-3923585">
        <id>Q8N5I4</id>
        <label>DHRSX</label>
    </interactant>
    <organismsDiffer>false</organismsDiffer>
    <experiments>3</experiments>
</comment>
<comment type="interaction">
    <interactant intactId="EBI-12947623">
        <id>Q96MV1</id>
    </interactant>
    <interactant intactId="EBI-3915253">
        <id>Q15125</id>
        <label>EBP</label>
    </interactant>
    <organismsDiffer>false</organismsDiffer>
    <experiments>3</experiments>
</comment>
<comment type="interaction">
    <interactant intactId="EBI-12947623">
        <id>Q96MV1</id>
    </interactant>
    <interactant intactId="EBI-2820492">
        <id>Q9BV81</id>
        <label>EMC6</label>
    </interactant>
    <organismsDiffer>false</organismsDiffer>
    <experiments>3</experiments>
</comment>
<comment type="interaction">
    <interactant intactId="EBI-12947623">
        <id>Q96MV1</id>
    </interactant>
    <interactant intactId="EBI-4319440">
        <id>P54849</id>
        <label>EMP1</label>
    </interactant>
    <organismsDiffer>false</organismsDiffer>
    <experiments>3</experiments>
</comment>
<comment type="interaction">
    <interactant intactId="EBI-12947623">
        <id>Q96MV1</id>
    </interactant>
    <interactant intactId="EBI-711490">
        <id>Q9UKR5</id>
        <label>ERG28</label>
    </interactant>
    <organismsDiffer>false</organismsDiffer>
    <experiments>3</experiments>
</comment>
<comment type="interaction">
    <interactant intactId="EBI-12947623">
        <id>Q96MV1</id>
    </interactant>
    <interactant intactId="EBI-11337888">
        <id>Q7L5A8</id>
        <label>FA2H</label>
    </interactant>
    <organismsDiffer>false</organismsDiffer>
    <experiments>3</experiments>
</comment>
<comment type="interaction">
    <interactant intactId="EBI-12947623">
        <id>Q96MV1</id>
    </interactant>
    <interactant intactId="EBI-714550">
        <id>P37268</id>
        <label>FDFT1</label>
    </interactant>
    <organismsDiffer>false</organismsDiffer>
    <experiments>3</experiments>
</comment>
<comment type="interaction">
    <interactant intactId="EBI-12947623">
        <id>Q96MV1</id>
    </interactant>
    <interactant intactId="EBI-713304">
        <id>Q9H0Q3</id>
        <label>FXYD6</label>
    </interactant>
    <organismsDiffer>false</organismsDiffer>
    <experiments>3</experiments>
</comment>
<comment type="interaction">
    <interactant intactId="EBI-12947623">
        <id>Q96MV1</id>
    </interactant>
    <interactant intactId="EBI-3905204">
        <id>P29033</id>
        <label>GJB2</label>
    </interactant>
    <organismsDiffer>false</organismsDiffer>
    <experiments>3</experiments>
</comment>
<comment type="interaction">
    <interactant intactId="EBI-12947623">
        <id>Q96MV1</id>
    </interactant>
    <interactant intactId="EBI-4401517">
        <id>O14653</id>
        <label>GOSR2</label>
    </interactant>
    <organismsDiffer>false</organismsDiffer>
    <experiments>3</experiments>
</comment>
<comment type="interaction">
    <interactant intactId="EBI-12947623">
        <id>Q96MV1</id>
    </interactant>
    <interactant intactId="EBI-702665">
        <id>P02724</id>
        <label>GYPA</label>
    </interactant>
    <organismsDiffer>false</organismsDiffer>
    <experiments>3</experiments>
</comment>
<comment type="interaction">
    <interactant intactId="EBI-12947623">
        <id>Q96MV1</id>
    </interactant>
    <interactant intactId="EBI-2806151">
        <id>P09601</id>
        <label>HMOX1</label>
    </interactant>
    <organismsDiffer>false</organismsDiffer>
    <experiments>3</experiments>
</comment>
<comment type="interaction">
    <interactant intactId="EBI-12947623">
        <id>Q96MV1</id>
    </interactant>
    <interactant intactId="EBI-720480">
        <id>P24593</id>
        <label>IGFBP5</label>
    </interactant>
    <organismsDiffer>false</organismsDiffer>
    <experiments>3</experiments>
</comment>
<comment type="interaction">
    <interactant intactId="EBI-12947623">
        <id>Q96MV1</id>
    </interactant>
    <interactant intactId="EBI-298429">
        <id>P04264</id>
        <label>KRT1</label>
    </interactant>
    <organismsDiffer>false</organismsDiffer>
    <experiments>3</experiments>
</comment>
<comment type="interaction">
    <interactant intactId="EBI-12947623">
        <id>Q96MV1</id>
    </interactant>
    <interactant intactId="EBI-12133176">
        <id>Q9UIQ6-2</id>
        <label>LNPEP</label>
    </interactant>
    <organismsDiffer>false</organismsDiffer>
    <experiments>3</experiments>
</comment>
<comment type="interaction">
    <interactant intactId="EBI-12947623">
        <id>Q96MV1</id>
    </interactant>
    <interactant intactId="EBI-12070086">
        <id>Q5J8X5</id>
        <label>MS4A13</label>
    </interactant>
    <organismsDiffer>false</organismsDiffer>
    <experiments>3</experiments>
</comment>
<comment type="interaction">
    <interactant intactId="EBI-12947623">
        <id>Q96MV1</id>
    </interactant>
    <interactant intactId="EBI-709754">
        <id>Q9HB07</id>
        <label>MYG1</label>
    </interactant>
    <organismsDiffer>false</organismsDiffer>
    <experiments>3</experiments>
</comment>
<comment type="interaction">
    <interactant intactId="EBI-12947623">
        <id>Q96MV1</id>
    </interactant>
    <interactant intactId="EBI-2863634">
        <id>Q9UHE5</id>
        <label>NAT8</label>
    </interactant>
    <organismsDiffer>false</organismsDiffer>
    <experiments>3</experiments>
</comment>
<comment type="interaction">
    <interactant intactId="EBI-12947623">
        <id>Q96MV1</id>
    </interactant>
    <interactant intactId="EBI-1246131">
        <id>O95167</id>
        <label>NDUFA3</label>
    </interactant>
    <organismsDiffer>false</organismsDiffer>
    <experiments>3</experiments>
</comment>
<comment type="interaction">
    <interactant intactId="EBI-12947623">
        <id>Q96MV1</id>
    </interactant>
    <interactant intactId="EBI-2802124">
        <id>Q92982</id>
        <label>NINJ1</label>
    </interactant>
    <organismsDiffer>false</organismsDiffer>
    <experiments>3</experiments>
</comment>
<comment type="interaction">
    <interactant intactId="EBI-12947623">
        <id>Q96MV1</id>
    </interactant>
    <interactant intactId="EBI-3919611">
        <id>Q16617</id>
        <label>NKG7</label>
    </interactant>
    <organismsDiffer>false</organismsDiffer>
    <experiments>3</experiments>
</comment>
<comment type="interaction">
    <interactant intactId="EBI-12947623">
        <id>Q96MV1</id>
    </interactant>
    <interactant intactId="EBI-1054848">
        <id>Q9P0S3</id>
        <label>ORMDL1</label>
    </interactant>
    <organismsDiffer>false</organismsDiffer>
    <experiments>3</experiments>
</comment>
<comment type="interaction">
    <interactant intactId="EBI-12947623">
        <id>Q96MV1</id>
    </interactant>
    <interactant intactId="EBI-2845982">
        <id>Q01453</id>
        <label>PMP22</label>
    </interactant>
    <organismsDiffer>false</organismsDiffer>
    <experiments>3</experiments>
</comment>
<comment type="interaction">
    <interactant intactId="EBI-12947623">
        <id>Q96MV1</id>
    </interactant>
    <interactant intactId="EBI-2506064">
        <id>O60831</id>
        <label>PRAF2</label>
    </interactant>
    <organismsDiffer>false</organismsDiffer>
    <experiments>3</experiments>
</comment>
<comment type="interaction">
    <interactant intactId="EBI-12947623">
        <id>Q96MV1</id>
    </interactant>
    <interactant intactId="EBI-722696">
        <id>Q7Z6L0</id>
        <label>PRRT2</label>
    </interactant>
    <organismsDiffer>false</organismsDiffer>
    <experiments>3</experiments>
</comment>
<comment type="interaction">
    <interactant intactId="EBI-12947623">
        <id>Q96MV1</id>
    </interactant>
    <interactant intactId="EBI-14065960">
        <id>Q96HR9-2</id>
        <label>REEP6</label>
    </interactant>
    <organismsDiffer>false</organismsDiffer>
    <experiments>3</experiments>
</comment>
<comment type="interaction">
    <interactant intactId="EBI-12947623">
        <id>Q96MV1</id>
    </interactant>
    <interactant intactId="EBI-2695784">
        <id>Q8TAC9</id>
        <label>SCAMP5</label>
    </interactant>
    <organismsDiffer>false</organismsDiffer>
    <experiments>3</experiments>
</comment>
<comment type="interaction">
    <interactant intactId="EBI-12947623">
        <id>Q96MV1</id>
    </interactant>
    <interactant intactId="EBI-2684237">
        <id>O00767</id>
        <label>SCD</label>
    </interactant>
    <organismsDiffer>false</organismsDiffer>
    <experiments>3</experiments>
</comment>
<comment type="interaction">
    <interactant intactId="EBI-12947623">
        <id>Q96MV1</id>
    </interactant>
    <interactant intactId="EBI-8652744">
        <id>Q96IW7</id>
        <label>SEC22A</label>
    </interactant>
    <organismsDiffer>false</organismsDiffer>
    <experiments>3</experiments>
</comment>
<comment type="interaction">
    <interactant intactId="EBI-12947623">
        <id>Q96MV1</id>
    </interactant>
    <interactant intactId="EBI-1058865">
        <id>O75396</id>
        <label>SEC22B</label>
    </interactant>
    <organismsDiffer>false</organismsDiffer>
    <experiments>3</experiments>
</comment>
<comment type="interaction">
    <interactant intactId="EBI-12947623">
        <id>Q96MV1</id>
    </interactant>
    <interactant intactId="EBI-10329948">
        <id>Q9Y6X1</id>
        <label>SERP1</label>
    </interactant>
    <organismsDiffer>false</organismsDiffer>
    <experiments>3</experiments>
</comment>
<comment type="interaction">
    <interactant intactId="EBI-12947623">
        <id>Q96MV1</id>
    </interactant>
    <interactant intactId="EBI-355861">
        <id>Q9H9B4</id>
        <label>SFXN1</label>
    </interactant>
    <organismsDiffer>false</organismsDiffer>
    <experiments>3</experiments>
</comment>
<comment type="interaction">
    <interactant intactId="EBI-12947623">
        <id>Q96MV1</id>
    </interactant>
    <interactant intactId="EBI-1171999">
        <id>Q9BWM7</id>
        <label>SFXN3</label>
    </interactant>
    <organismsDiffer>false</organismsDiffer>
    <experiments>3</experiments>
</comment>
<comment type="interaction">
    <interactant intactId="EBI-12947623">
        <id>Q96MV1</id>
    </interactant>
    <interactant intactId="EBI-11721845">
        <id>Q96BI1</id>
        <label>SLC22A18</label>
    </interactant>
    <organismsDiffer>false</organismsDiffer>
    <experiments>3</experiments>
</comment>
<comment type="interaction">
    <interactant intactId="EBI-12947623">
        <id>Q96MV1</id>
    </interactant>
    <interactant intactId="EBI-12266234">
        <id>Q8IVJ1</id>
        <label>SLC41A1</label>
    </interactant>
    <organismsDiffer>false</organismsDiffer>
    <experiments>3</experiments>
</comment>
<comment type="interaction">
    <interactant intactId="EBI-12947623">
        <id>Q96MV1</id>
    </interactant>
    <interactant intactId="EBI-10226799">
        <id>Q0VAQ4</id>
        <label>SMAGP</label>
    </interactant>
    <organismsDiffer>false</organismsDiffer>
    <experiments>3</experiments>
</comment>
<comment type="interaction">
    <interactant intactId="EBI-12947623">
        <id>Q96MV1</id>
    </interactant>
    <interactant intactId="EBI-738687">
        <id>P02808</id>
        <label>STATH</label>
    </interactant>
    <organismsDiffer>false</organismsDiffer>
    <experiments>3</experiments>
</comment>
<comment type="interaction">
    <interactant intactId="EBI-12947623">
        <id>Q96MV1</id>
    </interactant>
    <interactant intactId="EBI-2691717">
        <id>Q86Y82</id>
        <label>STX12</label>
    </interactant>
    <organismsDiffer>false</organismsDiffer>
    <experiments>3</experiments>
</comment>
<comment type="interaction">
    <interactant intactId="EBI-12947623">
        <id>Q96MV1</id>
    </interactant>
    <interactant intactId="EBI-726331">
        <id>Q9H7V2</id>
        <label>SYNDIG1</label>
    </interactant>
    <organismsDiffer>false</organismsDiffer>
    <experiments>3</experiments>
</comment>
<comment type="interaction">
    <interactant intactId="EBI-12947623">
        <id>Q96MV1</id>
    </interactant>
    <interactant intactId="EBI-1049004">
        <id>P57105</id>
        <label>SYNJ2BP</label>
    </interactant>
    <organismsDiffer>false</organismsDiffer>
    <experiments>3</experiments>
</comment>
<comment type="interaction">
    <interactant intactId="EBI-12947623">
        <id>Q96MV1</id>
    </interactant>
    <interactant intactId="EBI-1047996">
        <id>O14925</id>
        <label>TIMM23</label>
    </interactant>
    <organismsDiffer>false</organismsDiffer>
    <experiments>3</experiments>
</comment>
<comment type="interaction">
    <interactant intactId="EBI-12947623">
        <id>Q96MV1</id>
    </interactant>
    <interactant intactId="EBI-8633987">
        <id>Q12893</id>
        <label>TMEM115</label>
    </interactant>
    <organismsDiffer>false</organismsDiffer>
    <experiments>3</experiments>
</comment>
<comment type="interaction">
    <interactant intactId="EBI-12947623">
        <id>Q96MV1</id>
    </interactant>
    <interactant intactId="EBI-10171534">
        <id>A0PK00</id>
        <label>TMEM120B</label>
    </interactant>
    <organismsDiffer>false</organismsDiffer>
    <experiments>3</experiments>
</comment>
<comment type="interaction">
    <interactant intactId="EBI-12947623">
        <id>Q96MV1</id>
    </interactant>
    <interactant intactId="EBI-741829">
        <id>Q96HH6</id>
        <label>TMEM19</label>
    </interactant>
    <organismsDiffer>false</organismsDiffer>
    <experiments>3</experiments>
</comment>
<comment type="interaction">
    <interactant intactId="EBI-12947623">
        <id>Q96MV1</id>
    </interactant>
    <interactant intactId="EBI-12195227">
        <id>Q8NBD8</id>
        <label>TMEM229B</label>
    </interactant>
    <organismsDiffer>false</organismsDiffer>
    <experiments>3</experiments>
</comment>
<comment type="interaction">
    <interactant intactId="EBI-12947623">
        <id>Q96MV1</id>
    </interactant>
    <interactant intactId="EBI-10982110">
        <id>Q96Q45-2</id>
        <label>TMEM237</label>
    </interactant>
    <organismsDiffer>false</organismsDiffer>
    <experiments>3</experiments>
</comment>
<comment type="interaction">
    <interactant intactId="EBI-12947623">
        <id>Q96MV1</id>
    </interactant>
    <interactant intactId="EBI-2852148">
        <id>Q9H2L4</id>
        <label>TMEM60</label>
    </interactant>
    <organismsDiffer>false</organismsDiffer>
    <experiments>3</experiments>
</comment>
<comment type="interaction">
    <interactant intactId="EBI-12947623">
        <id>Q96MV1</id>
    </interactant>
    <interactant intactId="EBI-11343401">
        <id>Q9NYZ1</id>
        <label>TVP23B</label>
    </interactant>
    <organismsDiffer>false</organismsDiffer>
    <experiments>3</experiments>
</comment>
<comment type="interaction">
    <interactant intactId="EBI-12947623">
        <id>Q96MV1</id>
    </interactant>
    <interactant intactId="EBI-988826">
        <id>Q9Y385</id>
        <label>UBE2J1</label>
    </interactant>
    <organismsDiffer>false</organismsDiffer>
    <experiments>3</experiments>
</comment>
<comment type="interaction">
    <interactant intactId="EBI-12947623">
        <id>Q96MV1</id>
    </interactant>
    <interactant intactId="EBI-7850136">
        <id>Q9Y548</id>
        <label>YIPF1</label>
    </interactant>
    <organismsDiffer>false</organismsDiffer>
    <experiments>3</experiments>
</comment>
<comment type="interaction">
    <interactant intactId="EBI-12947623">
        <id>Q96MV1</id>
    </interactant>
    <interactant intactId="EBI-751253">
        <id>Q9BSR8</id>
        <label>YIPF4</label>
    </interactant>
    <organismsDiffer>false</organismsDiffer>
    <experiments>3</experiments>
</comment>
<comment type="subcellular location">
    <subcellularLocation>
        <location evidence="3">Membrane</location>
        <topology evidence="3">Multi-pass membrane protein</topology>
    </subcellularLocation>
</comment>
<comment type="similarity">
    <text evidence="3">Belongs to the TLCD4 family.</text>
</comment>
<dbReference type="EMBL" id="AK056404">
    <property type="protein sequence ID" value="BAB71177.1"/>
    <property type="molecule type" value="mRNA"/>
</dbReference>
<dbReference type="EMBL" id="CH471097">
    <property type="protein sequence ID" value="EAW73024.1"/>
    <property type="molecule type" value="Genomic_DNA"/>
</dbReference>
<dbReference type="EMBL" id="CH471097">
    <property type="protein sequence ID" value="EAW73025.1"/>
    <property type="molecule type" value="Genomic_DNA"/>
</dbReference>
<dbReference type="EMBL" id="BC137457">
    <property type="protein sequence ID" value="AAI37458.1"/>
    <property type="molecule type" value="mRNA"/>
</dbReference>
<dbReference type="EMBL" id="BC137458">
    <property type="protein sequence ID" value="AAI37459.1"/>
    <property type="molecule type" value="mRNA"/>
</dbReference>
<dbReference type="EMBL" id="BC139737">
    <property type="protein sequence ID" value="AAI39738.1"/>
    <property type="molecule type" value="mRNA"/>
</dbReference>
<dbReference type="CCDS" id="CCDS753.1"/>
<dbReference type="RefSeq" id="NP_001186608.1">
    <property type="nucleotide sequence ID" value="NM_001199679.2"/>
</dbReference>
<dbReference type="RefSeq" id="NP_689700.1">
    <property type="nucleotide sequence ID" value="NM_152487.3"/>
</dbReference>
<dbReference type="SMR" id="Q96MV1"/>
<dbReference type="BioGRID" id="127154">
    <property type="interactions" value="106"/>
</dbReference>
<dbReference type="FunCoup" id="Q96MV1">
    <property type="interactions" value="422"/>
</dbReference>
<dbReference type="IntAct" id="Q96MV1">
    <property type="interactions" value="97"/>
</dbReference>
<dbReference type="MINT" id="Q96MV1"/>
<dbReference type="STRING" id="9606.ENSP00000359222"/>
<dbReference type="CarbonylDB" id="Q96MV1"/>
<dbReference type="iPTMnet" id="Q96MV1"/>
<dbReference type="PhosphoSitePlus" id="Q96MV1"/>
<dbReference type="BioMuta" id="TMEM56"/>
<dbReference type="DMDM" id="74732443"/>
<dbReference type="jPOST" id="Q96MV1"/>
<dbReference type="MassIVE" id="Q96MV1"/>
<dbReference type="PaxDb" id="9606-ENSP00000359222"/>
<dbReference type="PeptideAtlas" id="Q96MV1"/>
<dbReference type="ProteomicsDB" id="77418"/>
<dbReference type="Pumba" id="Q96MV1"/>
<dbReference type="Antibodypedia" id="71812">
    <property type="antibodies" value="50 antibodies from 8 providers"/>
</dbReference>
<dbReference type="DNASU" id="148534"/>
<dbReference type="Ensembl" id="ENST00000370203.9">
    <property type="protein sequence ID" value="ENSP00000359222.4"/>
    <property type="gene ID" value="ENSG00000152078.10"/>
</dbReference>
<dbReference type="GeneID" id="148534"/>
<dbReference type="KEGG" id="hsa:148534"/>
<dbReference type="MANE-Select" id="ENST00000370203.9">
    <property type="protein sequence ID" value="ENSP00000359222.4"/>
    <property type="RefSeq nucleotide sequence ID" value="NM_152487.3"/>
    <property type="RefSeq protein sequence ID" value="NP_689700.1"/>
</dbReference>
<dbReference type="UCSC" id="uc001drb.4">
    <property type="organism name" value="human"/>
</dbReference>
<dbReference type="AGR" id="HGNC:26477"/>
<dbReference type="CTD" id="148534"/>
<dbReference type="DisGeNET" id="148534"/>
<dbReference type="GeneCards" id="TLCD4"/>
<dbReference type="HGNC" id="HGNC:26477">
    <property type="gene designation" value="TLCD4"/>
</dbReference>
<dbReference type="HPA" id="ENSG00000152078">
    <property type="expression patterns" value="Tissue enriched (liver)"/>
</dbReference>
<dbReference type="neXtProt" id="NX_Q96MV1"/>
<dbReference type="OpenTargets" id="ENSG00000152078"/>
<dbReference type="VEuPathDB" id="HostDB:ENSG00000152078"/>
<dbReference type="eggNOG" id="KOG4561">
    <property type="taxonomic scope" value="Eukaryota"/>
</dbReference>
<dbReference type="GeneTree" id="ENSGT01010000222313"/>
<dbReference type="HOGENOM" id="CLU_034597_2_0_1"/>
<dbReference type="InParanoid" id="Q96MV1"/>
<dbReference type="OMA" id="MPVYYSH"/>
<dbReference type="OrthoDB" id="10266980at2759"/>
<dbReference type="PAN-GO" id="Q96MV1">
    <property type="GO annotations" value="2 GO annotations based on evolutionary models"/>
</dbReference>
<dbReference type="PhylomeDB" id="Q96MV1"/>
<dbReference type="TreeFam" id="TF324847"/>
<dbReference type="PathwayCommons" id="Q96MV1"/>
<dbReference type="SignaLink" id="Q96MV1"/>
<dbReference type="BioGRID-ORCS" id="148534">
    <property type="hits" value="11 hits in 1140 CRISPR screens"/>
</dbReference>
<dbReference type="GenomeRNAi" id="148534"/>
<dbReference type="Pharos" id="Q96MV1">
    <property type="development level" value="Tdark"/>
</dbReference>
<dbReference type="PRO" id="PR:Q96MV1"/>
<dbReference type="Proteomes" id="UP000005640">
    <property type="component" value="Chromosome 1"/>
</dbReference>
<dbReference type="RNAct" id="Q96MV1">
    <property type="molecule type" value="protein"/>
</dbReference>
<dbReference type="Bgee" id="ENSG00000152078">
    <property type="expression patterns" value="Expressed in left ventricle myocardium and 172 other cell types or tissues"/>
</dbReference>
<dbReference type="ExpressionAtlas" id="Q96MV1">
    <property type="expression patterns" value="baseline and differential"/>
</dbReference>
<dbReference type="GO" id="GO:0005783">
    <property type="term" value="C:endoplasmic reticulum"/>
    <property type="evidence" value="ECO:0000318"/>
    <property type="project" value="GO_Central"/>
</dbReference>
<dbReference type="GO" id="GO:0016020">
    <property type="term" value="C:membrane"/>
    <property type="evidence" value="ECO:0007669"/>
    <property type="project" value="UniProtKB-SubCell"/>
</dbReference>
<dbReference type="GO" id="GO:0055088">
    <property type="term" value="P:lipid homeostasis"/>
    <property type="evidence" value="ECO:0000318"/>
    <property type="project" value="GO_Central"/>
</dbReference>
<dbReference type="InterPro" id="IPR006634">
    <property type="entry name" value="TLC-dom"/>
</dbReference>
<dbReference type="InterPro" id="IPR050846">
    <property type="entry name" value="TLCD"/>
</dbReference>
<dbReference type="PANTHER" id="PTHR13439">
    <property type="entry name" value="CT120 PROTEIN"/>
    <property type="match status" value="1"/>
</dbReference>
<dbReference type="PANTHER" id="PTHR13439:SF1">
    <property type="entry name" value="TLC DOMAIN-CONTAINING PROTEIN 4"/>
    <property type="match status" value="1"/>
</dbReference>
<dbReference type="Pfam" id="PF03798">
    <property type="entry name" value="TRAM_LAG1_CLN8"/>
    <property type="match status" value="1"/>
</dbReference>
<dbReference type="SMART" id="SM00724">
    <property type="entry name" value="TLC"/>
    <property type="match status" value="1"/>
</dbReference>
<dbReference type="PROSITE" id="PS50922">
    <property type="entry name" value="TLC"/>
    <property type="match status" value="1"/>
</dbReference>
<protein>
    <recommendedName>
        <fullName evidence="3">TLC domain-containing protein 4</fullName>
    </recommendedName>
    <alternativeName>
        <fullName>Transmembrane protein 56</fullName>
    </alternativeName>
</protein>
<proteinExistence type="evidence at protein level"/>
<sequence>MEINTKLLISVTCISFFTFQLLFYFVSYWFSAKVSPGFNSLSFKKKIEWNSRVVSTCHSLVVGIFGLYIFLFDEATKADPLWGGPSLANVNIAIASGYLISDLSIIILYWKVIGDKFFIMHHCASLYAYYLVLKNGVLAYIGNFRLLAELSSPFVNQRWFFEALKYPKFSKAIVINGILMTVVFFIVRIASMLPHYGFMYSVYGTEPYIRLGVLIQLSWVISCVVLDVMNVMWMIKISKGCIKVISHIRQEKAKNSLQNGKLD</sequence>
<reference key="1">
    <citation type="journal article" date="2004" name="Nat. Genet.">
        <title>Complete sequencing and characterization of 21,243 full-length human cDNAs.</title>
        <authorList>
            <person name="Ota T."/>
            <person name="Suzuki Y."/>
            <person name="Nishikawa T."/>
            <person name="Otsuki T."/>
            <person name="Sugiyama T."/>
            <person name="Irie R."/>
            <person name="Wakamatsu A."/>
            <person name="Hayashi K."/>
            <person name="Sato H."/>
            <person name="Nagai K."/>
            <person name="Kimura K."/>
            <person name="Makita H."/>
            <person name="Sekine M."/>
            <person name="Obayashi M."/>
            <person name="Nishi T."/>
            <person name="Shibahara T."/>
            <person name="Tanaka T."/>
            <person name="Ishii S."/>
            <person name="Yamamoto J."/>
            <person name="Saito K."/>
            <person name="Kawai Y."/>
            <person name="Isono Y."/>
            <person name="Nakamura Y."/>
            <person name="Nagahari K."/>
            <person name="Murakami K."/>
            <person name="Yasuda T."/>
            <person name="Iwayanagi T."/>
            <person name="Wagatsuma M."/>
            <person name="Shiratori A."/>
            <person name="Sudo H."/>
            <person name="Hosoiri T."/>
            <person name="Kaku Y."/>
            <person name="Kodaira H."/>
            <person name="Kondo H."/>
            <person name="Sugawara M."/>
            <person name="Takahashi M."/>
            <person name="Kanda K."/>
            <person name="Yokoi T."/>
            <person name="Furuya T."/>
            <person name="Kikkawa E."/>
            <person name="Omura Y."/>
            <person name="Abe K."/>
            <person name="Kamihara K."/>
            <person name="Katsuta N."/>
            <person name="Sato K."/>
            <person name="Tanikawa M."/>
            <person name="Yamazaki M."/>
            <person name="Ninomiya K."/>
            <person name="Ishibashi T."/>
            <person name="Yamashita H."/>
            <person name="Murakawa K."/>
            <person name="Fujimori K."/>
            <person name="Tanai H."/>
            <person name="Kimata M."/>
            <person name="Watanabe M."/>
            <person name="Hiraoka S."/>
            <person name="Chiba Y."/>
            <person name="Ishida S."/>
            <person name="Ono Y."/>
            <person name="Takiguchi S."/>
            <person name="Watanabe S."/>
            <person name="Yosida M."/>
            <person name="Hotuta T."/>
            <person name="Kusano J."/>
            <person name="Kanehori K."/>
            <person name="Takahashi-Fujii A."/>
            <person name="Hara H."/>
            <person name="Tanase T.-O."/>
            <person name="Nomura Y."/>
            <person name="Togiya S."/>
            <person name="Komai F."/>
            <person name="Hara R."/>
            <person name="Takeuchi K."/>
            <person name="Arita M."/>
            <person name="Imose N."/>
            <person name="Musashino K."/>
            <person name="Yuuki H."/>
            <person name="Oshima A."/>
            <person name="Sasaki N."/>
            <person name="Aotsuka S."/>
            <person name="Yoshikawa Y."/>
            <person name="Matsunawa H."/>
            <person name="Ichihara T."/>
            <person name="Shiohata N."/>
            <person name="Sano S."/>
            <person name="Moriya S."/>
            <person name="Momiyama H."/>
            <person name="Satoh N."/>
            <person name="Takami S."/>
            <person name="Terashima Y."/>
            <person name="Suzuki O."/>
            <person name="Nakagawa S."/>
            <person name="Senoh A."/>
            <person name="Mizoguchi H."/>
            <person name="Goto Y."/>
            <person name="Shimizu F."/>
            <person name="Wakebe H."/>
            <person name="Hishigaki H."/>
            <person name="Watanabe T."/>
            <person name="Sugiyama A."/>
            <person name="Takemoto M."/>
            <person name="Kawakami B."/>
            <person name="Yamazaki M."/>
            <person name="Watanabe K."/>
            <person name="Kumagai A."/>
            <person name="Itakura S."/>
            <person name="Fukuzumi Y."/>
            <person name="Fujimori Y."/>
            <person name="Komiyama M."/>
            <person name="Tashiro H."/>
            <person name="Tanigami A."/>
            <person name="Fujiwara T."/>
            <person name="Ono T."/>
            <person name="Yamada K."/>
            <person name="Fujii Y."/>
            <person name="Ozaki K."/>
            <person name="Hirao M."/>
            <person name="Ohmori Y."/>
            <person name="Kawabata A."/>
            <person name="Hikiji T."/>
            <person name="Kobatake N."/>
            <person name="Inagaki H."/>
            <person name="Ikema Y."/>
            <person name="Okamoto S."/>
            <person name="Okitani R."/>
            <person name="Kawakami T."/>
            <person name="Noguchi S."/>
            <person name="Itoh T."/>
            <person name="Shigeta K."/>
            <person name="Senba T."/>
            <person name="Matsumura K."/>
            <person name="Nakajima Y."/>
            <person name="Mizuno T."/>
            <person name="Morinaga M."/>
            <person name="Sasaki M."/>
            <person name="Togashi T."/>
            <person name="Oyama M."/>
            <person name="Hata H."/>
            <person name="Watanabe M."/>
            <person name="Komatsu T."/>
            <person name="Mizushima-Sugano J."/>
            <person name="Satoh T."/>
            <person name="Shirai Y."/>
            <person name="Takahashi Y."/>
            <person name="Nakagawa K."/>
            <person name="Okumura K."/>
            <person name="Nagase T."/>
            <person name="Nomura N."/>
            <person name="Kikuchi H."/>
            <person name="Masuho Y."/>
            <person name="Yamashita R."/>
            <person name="Nakai K."/>
            <person name="Yada T."/>
            <person name="Nakamura Y."/>
            <person name="Ohara O."/>
            <person name="Isogai T."/>
            <person name="Sugano S."/>
        </authorList>
    </citation>
    <scope>NUCLEOTIDE SEQUENCE [LARGE SCALE MRNA]</scope>
    <source>
        <tissue>Teratocarcinoma</tissue>
    </source>
</reference>
<reference key="2">
    <citation type="submission" date="2005-09" db="EMBL/GenBank/DDBJ databases">
        <authorList>
            <person name="Mural R.J."/>
            <person name="Istrail S."/>
            <person name="Sutton G.G."/>
            <person name="Florea L."/>
            <person name="Halpern A.L."/>
            <person name="Mobarry C.M."/>
            <person name="Lippert R."/>
            <person name="Walenz B."/>
            <person name="Shatkay H."/>
            <person name="Dew I."/>
            <person name="Miller J.R."/>
            <person name="Flanigan M.J."/>
            <person name="Edwards N.J."/>
            <person name="Bolanos R."/>
            <person name="Fasulo D."/>
            <person name="Halldorsson B.V."/>
            <person name="Hannenhalli S."/>
            <person name="Turner R."/>
            <person name="Yooseph S."/>
            <person name="Lu F."/>
            <person name="Nusskern D.R."/>
            <person name="Shue B.C."/>
            <person name="Zheng X.H."/>
            <person name="Zhong F."/>
            <person name="Delcher A.L."/>
            <person name="Huson D.H."/>
            <person name="Kravitz S.A."/>
            <person name="Mouchard L."/>
            <person name="Reinert K."/>
            <person name="Remington K.A."/>
            <person name="Clark A.G."/>
            <person name="Waterman M.S."/>
            <person name="Eichler E.E."/>
            <person name="Adams M.D."/>
            <person name="Hunkapiller M.W."/>
            <person name="Myers E.W."/>
            <person name="Venter J.C."/>
        </authorList>
    </citation>
    <scope>NUCLEOTIDE SEQUENCE [LARGE SCALE GENOMIC DNA]</scope>
</reference>
<reference key="3">
    <citation type="journal article" date="2004" name="Genome Res.">
        <title>The status, quality, and expansion of the NIH full-length cDNA project: the Mammalian Gene Collection (MGC).</title>
        <authorList>
            <consortium name="The MGC Project Team"/>
        </authorList>
    </citation>
    <scope>NUCLEOTIDE SEQUENCE [LARGE SCALE MRNA]</scope>
    <source>
        <tissue>Brain</tissue>
    </source>
</reference>
<reference key="4">
    <citation type="journal article" date="2009" name="Science">
        <title>Lysine acetylation targets protein complexes and co-regulates major cellular functions.</title>
        <authorList>
            <person name="Choudhary C."/>
            <person name="Kumar C."/>
            <person name="Gnad F."/>
            <person name="Nielsen M.L."/>
            <person name="Rehman M."/>
            <person name="Walther T.C."/>
            <person name="Olsen J.V."/>
            <person name="Mann M."/>
        </authorList>
    </citation>
    <scope>ACETYLATION [LARGE SCALE ANALYSIS] AT LYS-165</scope>
    <scope>IDENTIFICATION BY MASS SPECTROMETRY [LARGE SCALE ANALYSIS]</scope>
</reference>